<comment type="function">
    <text evidence="1">Specifically catalyzes the AdoMet-dependent 2'-O-ribose methylation of cytidine at position 56 in tRNAs.</text>
</comment>
<comment type="catalytic activity">
    <reaction evidence="1">
        <text>cytidine(56) in tRNA + S-adenosyl-L-methionine = 2'-O-methylcytidine(56) in tRNA + S-adenosyl-L-homocysteine + H(+)</text>
        <dbReference type="Rhea" id="RHEA:42968"/>
        <dbReference type="Rhea" id="RHEA-COMP:10308"/>
        <dbReference type="Rhea" id="RHEA-COMP:10309"/>
        <dbReference type="ChEBI" id="CHEBI:15378"/>
        <dbReference type="ChEBI" id="CHEBI:57856"/>
        <dbReference type="ChEBI" id="CHEBI:59789"/>
        <dbReference type="ChEBI" id="CHEBI:74495"/>
        <dbReference type="ChEBI" id="CHEBI:82748"/>
        <dbReference type="EC" id="2.1.1.206"/>
    </reaction>
</comment>
<comment type="subunit">
    <text evidence="1">Homodimer.</text>
</comment>
<comment type="subcellular location">
    <subcellularLocation>
        <location evidence="1">Cytoplasm</location>
    </subcellularLocation>
</comment>
<comment type="similarity">
    <text evidence="1">Belongs to the aTrm56 family.</text>
</comment>
<sequence length="186" mass="20951">MKIYVLRYGHRPGRDKRITTHVGLVARAFGAHGFILGDVIDEKVIGSIKKVMERWGGNLYIDAGVDSRKYVLEWKRRGGIVVHLTMYGLHIDDVIDEIRGLNKDILIVVGAEKVPPFFYEVADYNVAIGHQPHSEVAALAVFLDRFYMGKELHLSFPNAKLIIVPSPRGKKVKKIAEEEEGESTKD</sequence>
<protein>
    <recommendedName>
        <fullName evidence="1">tRNA (cytidine(56)-2'-O)-methyltransferase</fullName>
        <ecNumber evidence="1">2.1.1.206</ecNumber>
    </recommendedName>
    <alternativeName>
        <fullName evidence="1">tRNA ribose 2'-O-methyltransferase aTrm56</fullName>
    </alternativeName>
</protein>
<keyword id="KW-0963">Cytoplasm</keyword>
<keyword id="KW-0489">Methyltransferase</keyword>
<keyword id="KW-1185">Reference proteome</keyword>
<keyword id="KW-0949">S-adenosyl-L-methionine</keyword>
<keyword id="KW-0808">Transferase</keyword>
<keyword id="KW-0819">tRNA processing</keyword>
<feature type="chain" id="PRO_0000365319" description="tRNA (cytidine(56)-2'-O)-methyltransferase">
    <location>
        <begin position="1"/>
        <end position="186"/>
    </location>
</feature>
<feature type="binding site" evidence="1">
    <location>
        <position position="84"/>
    </location>
    <ligand>
        <name>S-adenosyl-L-methionine</name>
        <dbReference type="ChEBI" id="CHEBI:59789"/>
    </ligand>
</feature>
<feature type="binding site" evidence="1">
    <location>
        <begin position="110"/>
        <end position="114"/>
    </location>
    <ligand>
        <name>S-adenosyl-L-methionine</name>
        <dbReference type="ChEBI" id="CHEBI:59789"/>
    </ligand>
</feature>
<accession>A3DN06</accession>
<evidence type="ECO:0000255" key="1">
    <source>
        <dbReference type="HAMAP-Rule" id="MF_00077"/>
    </source>
</evidence>
<proteinExistence type="inferred from homology"/>
<dbReference type="EC" id="2.1.1.206" evidence="1"/>
<dbReference type="EMBL" id="CP000575">
    <property type="protein sequence ID" value="ABN70016.1"/>
    <property type="molecule type" value="Genomic_DNA"/>
</dbReference>
<dbReference type="RefSeq" id="WP_011839207.1">
    <property type="nucleotide sequence ID" value="NC_009033.1"/>
</dbReference>
<dbReference type="SMR" id="A3DN06"/>
<dbReference type="STRING" id="399550.Smar_0917"/>
<dbReference type="GeneID" id="4906564"/>
<dbReference type="KEGG" id="smr:Smar_0917"/>
<dbReference type="eggNOG" id="arCOG01857">
    <property type="taxonomic scope" value="Archaea"/>
</dbReference>
<dbReference type="HOGENOM" id="CLU_123709_0_0_2"/>
<dbReference type="OrthoDB" id="14397at2157"/>
<dbReference type="Proteomes" id="UP000000254">
    <property type="component" value="Chromosome"/>
</dbReference>
<dbReference type="GO" id="GO:0005737">
    <property type="term" value="C:cytoplasm"/>
    <property type="evidence" value="ECO:0007669"/>
    <property type="project" value="UniProtKB-SubCell"/>
</dbReference>
<dbReference type="GO" id="GO:0106059">
    <property type="term" value="F:tRNA (cytidine(56)-2'-O)-methyltransferase activity"/>
    <property type="evidence" value="ECO:0007669"/>
    <property type="project" value="UniProtKB-EC"/>
</dbReference>
<dbReference type="GO" id="GO:0002128">
    <property type="term" value="P:tRNA nucleoside ribose methylation"/>
    <property type="evidence" value="ECO:0007669"/>
    <property type="project" value="UniProtKB-UniRule"/>
</dbReference>
<dbReference type="CDD" id="cd18083">
    <property type="entry name" value="aTrm56-like"/>
    <property type="match status" value="1"/>
</dbReference>
<dbReference type="Gene3D" id="3.40.1280.10">
    <property type="match status" value="1"/>
</dbReference>
<dbReference type="HAMAP" id="MF_00077">
    <property type="entry name" value="tRNA_methyltr_aTrm56"/>
    <property type="match status" value="1"/>
</dbReference>
<dbReference type="InterPro" id="IPR029028">
    <property type="entry name" value="Alpha/beta_knot_MTases"/>
</dbReference>
<dbReference type="InterPro" id="IPR029026">
    <property type="entry name" value="tRNA_m1G_MTases_N"/>
</dbReference>
<dbReference type="InterPro" id="IPR002845">
    <property type="entry name" value="tRNA_mtfrase_aTrm56"/>
</dbReference>
<dbReference type="NCBIfam" id="NF003048">
    <property type="entry name" value="PRK03958.1"/>
    <property type="match status" value="1"/>
</dbReference>
<dbReference type="PANTHER" id="PTHR42197">
    <property type="entry name" value="TRNA (CYTIDINE(56)-2'-O)-METHYLTRANSFERASE"/>
    <property type="match status" value="1"/>
</dbReference>
<dbReference type="PANTHER" id="PTHR42197:SF1">
    <property type="entry name" value="TRNA (CYTIDINE(56)-2'-O)-METHYLTRANSFERASE"/>
    <property type="match status" value="1"/>
</dbReference>
<dbReference type="Pfam" id="PF01994">
    <property type="entry name" value="Trm56"/>
    <property type="match status" value="1"/>
</dbReference>
<dbReference type="PIRSF" id="PIRSF016123">
    <property type="entry name" value="UCP016123"/>
    <property type="match status" value="1"/>
</dbReference>
<dbReference type="SUPFAM" id="SSF75217">
    <property type="entry name" value="alpha/beta knot"/>
    <property type="match status" value="1"/>
</dbReference>
<gene>
    <name type="ordered locus">Smar_0917</name>
</gene>
<reference key="1">
    <citation type="journal article" date="2009" name="BMC Genomics">
        <title>The complete genome sequence of Staphylothermus marinus reveals differences in sulfur metabolism among heterotrophic Crenarchaeota.</title>
        <authorList>
            <person name="Anderson I.J."/>
            <person name="Dharmarajan L."/>
            <person name="Rodriguez J."/>
            <person name="Hooper S."/>
            <person name="Porat I."/>
            <person name="Ulrich L.E."/>
            <person name="Elkins J.G."/>
            <person name="Mavromatis K."/>
            <person name="Sun H."/>
            <person name="Land M."/>
            <person name="Lapidus A."/>
            <person name="Lucas S."/>
            <person name="Barry K."/>
            <person name="Huber H."/>
            <person name="Zhulin I.B."/>
            <person name="Whitman W.B."/>
            <person name="Mukhopadhyay B."/>
            <person name="Woese C."/>
            <person name="Bristow J."/>
            <person name="Kyrpides N."/>
        </authorList>
    </citation>
    <scope>NUCLEOTIDE SEQUENCE [LARGE SCALE GENOMIC DNA]</scope>
    <source>
        <strain>ATCC 43588 / DSM 3639 / JCM 9404 / F1</strain>
    </source>
</reference>
<reference key="2">
    <citation type="journal article" date="2009" name="Stand. Genomic Sci.">
        <title>Complete genome sequence of Staphylothermus marinus Stetter and Fiala 1986 type strain F1.</title>
        <authorList>
            <person name="Anderson I.J."/>
            <person name="Sun H."/>
            <person name="Lapidus A."/>
            <person name="Copeland A."/>
            <person name="Glavina Del Rio T."/>
            <person name="Tice H."/>
            <person name="Dalin E."/>
            <person name="Lucas S."/>
            <person name="Barry K."/>
            <person name="Land M."/>
            <person name="Richardson P."/>
            <person name="Huber H."/>
            <person name="Kyrpides N.C."/>
        </authorList>
    </citation>
    <scope>NUCLEOTIDE SEQUENCE [LARGE SCALE GENOMIC DNA]</scope>
    <source>
        <strain>ATCC 43588 / DSM 3639 / JCM 9404 / F1</strain>
    </source>
</reference>
<organism>
    <name type="scientific">Staphylothermus marinus (strain ATCC 43588 / DSM 3639 / JCM 9404 / F1)</name>
    <dbReference type="NCBI Taxonomy" id="399550"/>
    <lineage>
        <taxon>Archaea</taxon>
        <taxon>Thermoproteota</taxon>
        <taxon>Thermoprotei</taxon>
        <taxon>Desulfurococcales</taxon>
        <taxon>Desulfurococcaceae</taxon>
        <taxon>Staphylothermus</taxon>
    </lineage>
</organism>
<name>TRM56_STAMF</name>